<sequence>MEISHVIVLALVQGISEFLPISSSAHLILVPKLLGWPDQGLAFDVAVHVGTLSAILFYFKDTIFKLLRDFFASIAQRKMVGDSLLVWCVGFATIPVGIFGLLFNNVIEEYARSGVVIAVTTIIFGIALYFADLRSTNKSEYEMTIKFALIIGLAQAVALIPGVSRSGITMTAALFLGFSHKGSANFSFLLSIPVIILAGGLESIKLIKDPNALPWSDIALGVIISAVSAYICVKLFMGIISRIRMLPFVIYRLILGAFLLYLFL</sequence>
<protein>
    <recommendedName>
        <fullName evidence="1">Undecaprenyl-diphosphatase</fullName>
        <ecNumber evidence="1">3.6.1.27</ecNumber>
    </recommendedName>
    <alternativeName>
        <fullName evidence="1">Bacitracin resistance protein</fullName>
    </alternativeName>
    <alternativeName>
        <fullName evidence="1">Undecaprenyl pyrophosphate phosphatase</fullName>
    </alternativeName>
</protein>
<dbReference type="EC" id="3.6.1.27" evidence="1"/>
<dbReference type="EMBL" id="CP000792">
    <property type="protein sequence ID" value="EAT98134.1"/>
    <property type="molecule type" value="Genomic_DNA"/>
</dbReference>
<dbReference type="RefSeq" id="WP_002941660.1">
    <property type="nucleotide sequence ID" value="NC_009802.2"/>
</dbReference>
<dbReference type="SMR" id="A7ZFX1"/>
<dbReference type="STRING" id="360104.CCC13826_1734"/>
<dbReference type="KEGG" id="cco:CCC13826_1734"/>
<dbReference type="eggNOG" id="COG1968">
    <property type="taxonomic scope" value="Bacteria"/>
</dbReference>
<dbReference type="HOGENOM" id="CLU_060296_1_0_7"/>
<dbReference type="OrthoDB" id="9808289at2"/>
<dbReference type="Proteomes" id="UP000001121">
    <property type="component" value="Chromosome"/>
</dbReference>
<dbReference type="GO" id="GO:0005886">
    <property type="term" value="C:plasma membrane"/>
    <property type="evidence" value="ECO:0007669"/>
    <property type="project" value="UniProtKB-SubCell"/>
</dbReference>
<dbReference type="GO" id="GO:0050380">
    <property type="term" value="F:undecaprenyl-diphosphatase activity"/>
    <property type="evidence" value="ECO:0007669"/>
    <property type="project" value="UniProtKB-UniRule"/>
</dbReference>
<dbReference type="GO" id="GO:0071555">
    <property type="term" value="P:cell wall organization"/>
    <property type="evidence" value="ECO:0007669"/>
    <property type="project" value="UniProtKB-KW"/>
</dbReference>
<dbReference type="GO" id="GO:0009252">
    <property type="term" value="P:peptidoglycan biosynthetic process"/>
    <property type="evidence" value="ECO:0007669"/>
    <property type="project" value="UniProtKB-KW"/>
</dbReference>
<dbReference type="GO" id="GO:0008360">
    <property type="term" value="P:regulation of cell shape"/>
    <property type="evidence" value="ECO:0007669"/>
    <property type="project" value="UniProtKB-KW"/>
</dbReference>
<dbReference type="GO" id="GO:0046677">
    <property type="term" value="P:response to antibiotic"/>
    <property type="evidence" value="ECO:0007669"/>
    <property type="project" value="UniProtKB-UniRule"/>
</dbReference>
<dbReference type="HAMAP" id="MF_01006">
    <property type="entry name" value="Undec_diphosphatase"/>
    <property type="match status" value="1"/>
</dbReference>
<dbReference type="InterPro" id="IPR003824">
    <property type="entry name" value="UppP"/>
</dbReference>
<dbReference type="NCBIfam" id="NF001393">
    <property type="entry name" value="PRK00281.2-4"/>
    <property type="match status" value="1"/>
</dbReference>
<dbReference type="NCBIfam" id="TIGR00753">
    <property type="entry name" value="undec_PP_bacA"/>
    <property type="match status" value="1"/>
</dbReference>
<dbReference type="PANTHER" id="PTHR30622">
    <property type="entry name" value="UNDECAPRENYL-DIPHOSPHATASE"/>
    <property type="match status" value="1"/>
</dbReference>
<dbReference type="PANTHER" id="PTHR30622:SF4">
    <property type="entry name" value="UNDECAPRENYL-DIPHOSPHATASE"/>
    <property type="match status" value="1"/>
</dbReference>
<dbReference type="Pfam" id="PF02673">
    <property type="entry name" value="BacA"/>
    <property type="match status" value="1"/>
</dbReference>
<keyword id="KW-0046">Antibiotic resistance</keyword>
<keyword id="KW-0997">Cell inner membrane</keyword>
<keyword id="KW-1003">Cell membrane</keyword>
<keyword id="KW-0133">Cell shape</keyword>
<keyword id="KW-0961">Cell wall biogenesis/degradation</keyword>
<keyword id="KW-0378">Hydrolase</keyword>
<keyword id="KW-0472">Membrane</keyword>
<keyword id="KW-0573">Peptidoglycan synthesis</keyword>
<keyword id="KW-0812">Transmembrane</keyword>
<keyword id="KW-1133">Transmembrane helix</keyword>
<gene>
    <name evidence="1" type="primary">uppP</name>
    <name type="ordered locus">Ccon26_18440</name>
    <name type="ORF">CCC13826_1734</name>
</gene>
<name>UPPP_CAMC1</name>
<comment type="function">
    <text evidence="1">Catalyzes the dephosphorylation of undecaprenyl diphosphate (UPP). Confers resistance to bacitracin.</text>
</comment>
<comment type="catalytic activity">
    <reaction evidence="1">
        <text>di-trans,octa-cis-undecaprenyl diphosphate + H2O = di-trans,octa-cis-undecaprenyl phosphate + phosphate + H(+)</text>
        <dbReference type="Rhea" id="RHEA:28094"/>
        <dbReference type="ChEBI" id="CHEBI:15377"/>
        <dbReference type="ChEBI" id="CHEBI:15378"/>
        <dbReference type="ChEBI" id="CHEBI:43474"/>
        <dbReference type="ChEBI" id="CHEBI:58405"/>
        <dbReference type="ChEBI" id="CHEBI:60392"/>
        <dbReference type="EC" id="3.6.1.27"/>
    </reaction>
</comment>
<comment type="subcellular location">
    <subcellularLocation>
        <location evidence="1">Cell inner membrane</location>
        <topology evidence="1">Multi-pass membrane protein</topology>
    </subcellularLocation>
</comment>
<comment type="miscellaneous">
    <text>Bacitracin is thought to be involved in the inhibition of peptidoglycan synthesis by sequestering undecaprenyl diphosphate, thereby reducing the pool of lipid carrier available.</text>
</comment>
<comment type="similarity">
    <text evidence="1">Belongs to the UppP family.</text>
</comment>
<reference key="1">
    <citation type="submission" date="2007-10" db="EMBL/GenBank/DDBJ databases">
        <title>Genome sequence of Campylobacter concisus 13826 isolated from human feces.</title>
        <authorList>
            <person name="Fouts D.E."/>
            <person name="Mongodin E.F."/>
            <person name="Puiu D."/>
            <person name="Sebastian Y."/>
            <person name="Miller W.G."/>
            <person name="Mandrell R.E."/>
            <person name="On S."/>
            <person name="Nelson K.E."/>
        </authorList>
    </citation>
    <scope>NUCLEOTIDE SEQUENCE [LARGE SCALE GENOMIC DNA]</scope>
    <source>
        <strain>13826</strain>
    </source>
</reference>
<evidence type="ECO:0000255" key="1">
    <source>
        <dbReference type="HAMAP-Rule" id="MF_01006"/>
    </source>
</evidence>
<accession>A7ZFX1</accession>
<feature type="chain" id="PRO_1000072891" description="Undecaprenyl-diphosphatase">
    <location>
        <begin position="1"/>
        <end position="264"/>
    </location>
</feature>
<feature type="transmembrane region" description="Helical" evidence="1">
    <location>
        <begin position="1"/>
        <end position="21"/>
    </location>
</feature>
<feature type="transmembrane region" description="Helical" evidence="1">
    <location>
        <begin position="39"/>
        <end position="59"/>
    </location>
</feature>
<feature type="transmembrane region" description="Helical" evidence="1">
    <location>
        <begin position="83"/>
        <end position="103"/>
    </location>
</feature>
<feature type="transmembrane region" description="Helical" evidence="1">
    <location>
        <begin position="113"/>
        <end position="133"/>
    </location>
</feature>
<feature type="transmembrane region" description="Helical" evidence="1">
    <location>
        <begin position="143"/>
        <end position="163"/>
    </location>
</feature>
<feature type="transmembrane region" description="Helical" evidence="1">
    <location>
        <begin position="184"/>
        <end position="204"/>
    </location>
</feature>
<feature type="transmembrane region" description="Helical" evidence="1">
    <location>
        <begin position="220"/>
        <end position="240"/>
    </location>
</feature>
<feature type="transmembrane region" description="Helical" evidence="1">
    <location>
        <begin position="243"/>
        <end position="263"/>
    </location>
</feature>
<organism>
    <name type="scientific">Campylobacter concisus (strain 13826)</name>
    <dbReference type="NCBI Taxonomy" id="360104"/>
    <lineage>
        <taxon>Bacteria</taxon>
        <taxon>Pseudomonadati</taxon>
        <taxon>Campylobacterota</taxon>
        <taxon>Epsilonproteobacteria</taxon>
        <taxon>Campylobacterales</taxon>
        <taxon>Campylobacteraceae</taxon>
        <taxon>Campylobacter</taxon>
    </lineage>
</organism>
<proteinExistence type="inferred from homology"/>